<evidence type="ECO:0000255" key="1">
    <source>
        <dbReference type="HAMAP-Rule" id="MF_01347"/>
    </source>
</evidence>
<feature type="chain" id="PRO_0000254373" description="ATP synthase subunit beta">
    <location>
        <begin position="1"/>
        <end position="463"/>
    </location>
</feature>
<feature type="binding site" evidence="1">
    <location>
        <begin position="152"/>
        <end position="159"/>
    </location>
    <ligand>
        <name>ATP</name>
        <dbReference type="ChEBI" id="CHEBI:30616"/>
    </ligand>
</feature>
<keyword id="KW-0066">ATP synthesis</keyword>
<keyword id="KW-0067">ATP-binding</keyword>
<keyword id="KW-0997">Cell inner membrane</keyword>
<keyword id="KW-1003">Cell membrane</keyword>
<keyword id="KW-0139">CF(1)</keyword>
<keyword id="KW-0375">Hydrogen ion transport</keyword>
<keyword id="KW-0406">Ion transport</keyword>
<keyword id="KW-0472">Membrane</keyword>
<keyword id="KW-0547">Nucleotide-binding</keyword>
<keyword id="KW-1185">Reference proteome</keyword>
<keyword id="KW-1278">Translocase</keyword>
<keyword id="KW-0813">Transport</keyword>
<dbReference type="EC" id="7.1.2.2" evidence="1"/>
<dbReference type="EMBL" id="AE014299">
    <property type="protein sequence ID" value="AAN57706.1"/>
    <property type="molecule type" value="Genomic_DNA"/>
</dbReference>
<dbReference type="RefSeq" id="NP_720263.1">
    <property type="nucleotide sequence ID" value="NC_004347.2"/>
</dbReference>
<dbReference type="RefSeq" id="WP_011074330.1">
    <property type="nucleotide sequence ID" value="NC_004347.2"/>
</dbReference>
<dbReference type="SMR" id="Q8E8C0"/>
<dbReference type="STRING" id="211586.SO_4747"/>
<dbReference type="PaxDb" id="211586-SO_4747"/>
<dbReference type="KEGG" id="son:SO_4747"/>
<dbReference type="PATRIC" id="fig|211586.12.peg.4604"/>
<dbReference type="eggNOG" id="COG0055">
    <property type="taxonomic scope" value="Bacteria"/>
</dbReference>
<dbReference type="HOGENOM" id="CLU_022398_0_2_6"/>
<dbReference type="OrthoDB" id="9801639at2"/>
<dbReference type="PhylomeDB" id="Q8E8C0"/>
<dbReference type="BioCyc" id="SONE211586:G1GMP-4392-MONOMER"/>
<dbReference type="Proteomes" id="UP000008186">
    <property type="component" value="Chromosome"/>
</dbReference>
<dbReference type="GO" id="GO:0005886">
    <property type="term" value="C:plasma membrane"/>
    <property type="evidence" value="ECO:0007669"/>
    <property type="project" value="UniProtKB-SubCell"/>
</dbReference>
<dbReference type="GO" id="GO:0045259">
    <property type="term" value="C:proton-transporting ATP synthase complex"/>
    <property type="evidence" value="ECO:0007669"/>
    <property type="project" value="UniProtKB-KW"/>
</dbReference>
<dbReference type="GO" id="GO:0005524">
    <property type="term" value="F:ATP binding"/>
    <property type="evidence" value="ECO:0007669"/>
    <property type="project" value="UniProtKB-UniRule"/>
</dbReference>
<dbReference type="GO" id="GO:0016887">
    <property type="term" value="F:ATP hydrolysis activity"/>
    <property type="evidence" value="ECO:0007669"/>
    <property type="project" value="InterPro"/>
</dbReference>
<dbReference type="GO" id="GO:0046933">
    <property type="term" value="F:proton-transporting ATP synthase activity, rotational mechanism"/>
    <property type="evidence" value="ECO:0007669"/>
    <property type="project" value="UniProtKB-UniRule"/>
</dbReference>
<dbReference type="CDD" id="cd18110">
    <property type="entry name" value="ATP-synt_F1_beta_C"/>
    <property type="match status" value="1"/>
</dbReference>
<dbReference type="CDD" id="cd18115">
    <property type="entry name" value="ATP-synt_F1_beta_N"/>
    <property type="match status" value="1"/>
</dbReference>
<dbReference type="CDD" id="cd01133">
    <property type="entry name" value="F1-ATPase_beta_CD"/>
    <property type="match status" value="1"/>
</dbReference>
<dbReference type="FunFam" id="1.10.1140.10:FF:000001">
    <property type="entry name" value="ATP synthase subunit beta"/>
    <property type="match status" value="1"/>
</dbReference>
<dbReference type="FunFam" id="2.40.10.170:FF:000003">
    <property type="entry name" value="ATP synthase subunit beta"/>
    <property type="match status" value="1"/>
</dbReference>
<dbReference type="FunFam" id="3.40.50.300:FF:000004">
    <property type="entry name" value="ATP synthase subunit beta"/>
    <property type="match status" value="1"/>
</dbReference>
<dbReference type="Gene3D" id="2.40.10.170">
    <property type="match status" value="1"/>
</dbReference>
<dbReference type="Gene3D" id="1.10.1140.10">
    <property type="entry name" value="Bovine Mitochondrial F1-atpase, Atp Synthase Beta Chain, Chain D, domain 3"/>
    <property type="match status" value="1"/>
</dbReference>
<dbReference type="Gene3D" id="3.40.50.300">
    <property type="entry name" value="P-loop containing nucleotide triphosphate hydrolases"/>
    <property type="match status" value="1"/>
</dbReference>
<dbReference type="HAMAP" id="MF_01347">
    <property type="entry name" value="ATP_synth_beta_bact"/>
    <property type="match status" value="1"/>
</dbReference>
<dbReference type="InterPro" id="IPR003593">
    <property type="entry name" value="AAA+_ATPase"/>
</dbReference>
<dbReference type="InterPro" id="IPR055190">
    <property type="entry name" value="ATP-synt_VA_C"/>
</dbReference>
<dbReference type="InterPro" id="IPR005722">
    <property type="entry name" value="ATP_synth_F1_bsu"/>
</dbReference>
<dbReference type="InterPro" id="IPR020003">
    <property type="entry name" value="ATPase_a/bsu_AS"/>
</dbReference>
<dbReference type="InterPro" id="IPR050053">
    <property type="entry name" value="ATPase_alpha/beta_chains"/>
</dbReference>
<dbReference type="InterPro" id="IPR004100">
    <property type="entry name" value="ATPase_F1/V1/A1_a/bsu_N"/>
</dbReference>
<dbReference type="InterPro" id="IPR036121">
    <property type="entry name" value="ATPase_F1/V1/A1_a/bsu_N_sf"/>
</dbReference>
<dbReference type="InterPro" id="IPR000194">
    <property type="entry name" value="ATPase_F1/V1/A1_a/bsu_nucl-bd"/>
</dbReference>
<dbReference type="InterPro" id="IPR024034">
    <property type="entry name" value="ATPase_F1/V1_b/a_C"/>
</dbReference>
<dbReference type="InterPro" id="IPR027417">
    <property type="entry name" value="P-loop_NTPase"/>
</dbReference>
<dbReference type="NCBIfam" id="TIGR01039">
    <property type="entry name" value="atpD"/>
    <property type="match status" value="1"/>
</dbReference>
<dbReference type="PANTHER" id="PTHR15184">
    <property type="entry name" value="ATP SYNTHASE"/>
    <property type="match status" value="1"/>
</dbReference>
<dbReference type="PANTHER" id="PTHR15184:SF71">
    <property type="entry name" value="ATP SYNTHASE SUBUNIT BETA, MITOCHONDRIAL"/>
    <property type="match status" value="1"/>
</dbReference>
<dbReference type="Pfam" id="PF00006">
    <property type="entry name" value="ATP-synt_ab"/>
    <property type="match status" value="1"/>
</dbReference>
<dbReference type="Pfam" id="PF02874">
    <property type="entry name" value="ATP-synt_ab_N"/>
    <property type="match status" value="1"/>
</dbReference>
<dbReference type="Pfam" id="PF22919">
    <property type="entry name" value="ATP-synt_VA_C"/>
    <property type="match status" value="1"/>
</dbReference>
<dbReference type="SMART" id="SM00382">
    <property type="entry name" value="AAA"/>
    <property type="match status" value="1"/>
</dbReference>
<dbReference type="SUPFAM" id="SSF47917">
    <property type="entry name" value="C-terminal domain of alpha and beta subunits of F1 ATP synthase"/>
    <property type="match status" value="1"/>
</dbReference>
<dbReference type="SUPFAM" id="SSF50615">
    <property type="entry name" value="N-terminal domain of alpha and beta subunits of F1 ATP synthase"/>
    <property type="match status" value="1"/>
</dbReference>
<dbReference type="SUPFAM" id="SSF52540">
    <property type="entry name" value="P-loop containing nucleoside triphosphate hydrolases"/>
    <property type="match status" value="1"/>
</dbReference>
<dbReference type="PROSITE" id="PS00152">
    <property type="entry name" value="ATPASE_ALPHA_BETA"/>
    <property type="match status" value="1"/>
</dbReference>
<accession>Q8E8C0</accession>
<organism>
    <name type="scientific">Shewanella oneidensis (strain ATCC 700550 / JCM 31522 / CIP 106686 / LMG 19005 / NCIMB 14063 / MR-1)</name>
    <dbReference type="NCBI Taxonomy" id="211586"/>
    <lineage>
        <taxon>Bacteria</taxon>
        <taxon>Pseudomonadati</taxon>
        <taxon>Pseudomonadota</taxon>
        <taxon>Gammaproteobacteria</taxon>
        <taxon>Alteromonadales</taxon>
        <taxon>Shewanellaceae</taxon>
        <taxon>Shewanella</taxon>
    </lineage>
</organism>
<name>ATPB_SHEON</name>
<comment type="function">
    <text evidence="1">Produces ATP from ADP in the presence of a proton gradient across the membrane. The catalytic sites are hosted primarily by the beta subunits.</text>
</comment>
<comment type="catalytic activity">
    <reaction evidence="1">
        <text>ATP + H2O + 4 H(+)(in) = ADP + phosphate + 5 H(+)(out)</text>
        <dbReference type="Rhea" id="RHEA:57720"/>
        <dbReference type="ChEBI" id="CHEBI:15377"/>
        <dbReference type="ChEBI" id="CHEBI:15378"/>
        <dbReference type="ChEBI" id="CHEBI:30616"/>
        <dbReference type="ChEBI" id="CHEBI:43474"/>
        <dbReference type="ChEBI" id="CHEBI:456216"/>
        <dbReference type="EC" id="7.1.2.2"/>
    </reaction>
</comment>
<comment type="subunit">
    <text evidence="1">F-type ATPases have 2 components, CF(1) - the catalytic core - and CF(0) - the membrane proton channel. CF(1) has five subunits: alpha(3), beta(3), gamma(1), delta(1), epsilon(1). CF(0) has three main subunits: a(1), b(2) and c(9-12). The alpha and beta chains form an alternating ring which encloses part of the gamma chain. CF(1) is attached to CF(0) by a central stalk formed by the gamma and epsilon chains, while a peripheral stalk is formed by the delta and b chains.</text>
</comment>
<comment type="subcellular location">
    <subcellularLocation>
        <location evidence="1">Cell inner membrane</location>
        <topology evidence="1">Peripheral membrane protein</topology>
    </subcellularLocation>
</comment>
<comment type="similarity">
    <text evidence="1">Belongs to the ATPase alpha/beta chains family.</text>
</comment>
<gene>
    <name evidence="1" type="primary">atpD</name>
    <name type="ordered locus">SO_4747</name>
</gene>
<protein>
    <recommendedName>
        <fullName evidence="1">ATP synthase subunit beta</fullName>
        <ecNumber evidence="1">7.1.2.2</ecNumber>
    </recommendedName>
    <alternativeName>
        <fullName evidence="1">ATP synthase F1 sector subunit beta</fullName>
    </alternativeName>
    <alternativeName>
        <fullName evidence="1">F-ATPase subunit beta</fullName>
    </alternativeName>
</protein>
<proteinExistence type="inferred from homology"/>
<sequence length="463" mass="49774">MSTGTVVQVIGAVVDVEFPQDAVPQVYDALKITGEGSCNGLVLEVQQQLGGGVVRTIAMGTSDGLRRGLEVVNSGSPISVPVGTATLGRIMNVLGDPIDEAGAIGEEERYVIHRAAPSYEEQSNTTELLETGIKVIDLVCPFAKGGKVGLFGGAGVGKTVNMMELINNIAKAHSGLSVFAGVGERTREGNDFYYEMKDSGVLDKVAMVYGQMNEPPGNRLRVALTGLTMAEKFRDEGRDVLLFVDNIYRYTLAGTEVSALLGRMPSAVGYQPTLAEEMGVLQERITSTKTGSITSVQAVYVPADDLTDPSPATTFAHLDATVVLSRQIASLGIYPAVDPLDSTSRQLDPLVVGQEHYDVANGVQTVLQRYKELKDIIAILGMDELSDDDKMTVSRARKIERFLSQPFHVAEVFTGSPGKYVSLKDTIRGFKGILSGEFDHIPEQAFYMVGSIDEAVEKANKKK</sequence>
<reference key="1">
    <citation type="journal article" date="2002" name="Nat. Biotechnol.">
        <title>Genome sequence of the dissimilatory metal ion-reducing bacterium Shewanella oneidensis.</title>
        <authorList>
            <person name="Heidelberg J.F."/>
            <person name="Paulsen I.T."/>
            <person name="Nelson K.E."/>
            <person name="Gaidos E.J."/>
            <person name="Nelson W.C."/>
            <person name="Read T.D."/>
            <person name="Eisen J.A."/>
            <person name="Seshadri R."/>
            <person name="Ward N.L."/>
            <person name="Methe B.A."/>
            <person name="Clayton R.A."/>
            <person name="Meyer T."/>
            <person name="Tsapin A."/>
            <person name="Scott J."/>
            <person name="Beanan M.J."/>
            <person name="Brinkac L.M."/>
            <person name="Daugherty S.C."/>
            <person name="DeBoy R.T."/>
            <person name="Dodson R.J."/>
            <person name="Durkin A.S."/>
            <person name="Haft D.H."/>
            <person name="Kolonay J.F."/>
            <person name="Madupu R."/>
            <person name="Peterson J.D."/>
            <person name="Umayam L.A."/>
            <person name="White O."/>
            <person name="Wolf A.M."/>
            <person name="Vamathevan J.J."/>
            <person name="Weidman J.F."/>
            <person name="Impraim M."/>
            <person name="Lee K."/>
            <person name="Berry K.J."/>
            <person name="Lee C."/>
            <person name="Mueller J."/>
            <person name="Khouri H.M."/>
            <person name="Gill J."/>
            <person name="Utterback T.R."/>
            <person name="McDonald L.A."/>
            <person name="Feldblyum T.V."/>
            <person name="Smith H.O."/>
            <person name="Venter J.C."/>
            <person name="Nealson K.H."/>
            <person name="Fraser C.M."/>
        </authorList>
    </citation>
    <scope>NUCLEOTIDE SEQUENCE [LARGE SCALE GENOMIC DNA]</scope>
    <source>
        <strain>ATCC 700550 / JCM 31522 / CIP 106686 / LMG 19005 / NCIMB 14063 / MR-1</strain>
    </source>
</reference>